<reference key="1">
    <citation type="journal article" date="2005" name="Genome Res.">
        <title>Sequence, annotation, and analysis of synteny between rice chromosome 3 and diverged grass species.</title>
        <authorList>
            <consortium name="The rice chromosome 3 sequencing consortium"/>
            <person name="Buell C.R."/>
            <person name="Yuan Q."/>
            <person name="Ouyang S."/>
            <person name="Liu J."/>
            <person name="Zhu W."/>
            <person name="Wang A."/>
            <person name="Maiti R."/>
            <person name="Haas B."/>
            <person name="Wortman J."/>
            <person name="Pertea M."/>
            <person name="Jones K.M."/>
            <person name="Kim M."/>
            <person name="Overton L."/>
            <person name="Tsitrin T."/>
            <person name="Fadrosh D."/>
            <person name="Bera J."/>
            <person name="Weaver B."/>
            <person name="Jin S."/>
            <person name="Johri S."/>
            <person name="Reardon M."/>
            <person name="Webb K."/>
            <person name="Hill J."/>
            <person name="Moffat K."/>
            <person name="Tallon L."/>
            <person name="Van Aken S."/>
            <person name="Lewis M."/>
            <person name="Utterback T."/>
            <person name="Feldblyum T."/>
            <person name="Zismann V."/>
            <person name="Iobst S."/>
            <person name="Hsiao J."/>
            <person name="de Vazeille A.R."/>
            <person name="Salzberg S.L."/>
            <person name="White O."/>
            <person name="Fraser C.M."/>
            <person name="Yu Y."/>
            <person name="Kim H."/>
            <person name="Rambo T."/>
            <person name="Currie J."/>
            <person name="Collura K."/>
            <person name="Kernodle-Thompson S."/>
            <person name="Wei F."/>
            <person name="Kudrna K."/>
            <person name="Ammiraju J.S.S."/>
            <person name="Luo M."/>
            <person name="Goicoechea J.L."/>
            <person name="Wing R.A."/>
            <person name="Henry D."/>
            <person name="Oates R."/>
            <person name="Palmer M."/>
            <person name="Pries G."/>
            <person name="Saski C."/>
            <person name="Simmons J."/>
            <person name="Soderlund C."/>
            <person name="Nelson W."/>
            <person name="de la Bastide M."/>
            <person name="Spiegel L."/>
            <person name="Nascimento L."/>
            <person name="Huang E."/>
            <person name="Preston R."/>
            <person name="Zutavern T."/>
            <person name="Palmer L."/>
            <person name="O'Shaughnessy A."/>
            <person name="Dike S."/>
            <person name="McCombie W.R."/>
            <person name="Minx P."/>
            <person name="Cordum H."/>
            <person name="Wilson R."/>
            <person name="Jin W."/>
            <person name="Lee H.R."/>
            <person name="Jiang J."/>
            <person name="Jackson S."/>
        </authorList>
    </citation>
    <scope>NUCLEOTIDE SEQUENCE [LARGE SCALE GENOMIC DNA]</scope>
    <source>
        <strain>cv. Nipponbare</strain>
    </source>
</reference>
<reference key="2">
    <citation type="journal article" date="2005" name="Nature">
        <title>The map-based sequence of the rice genome.</title>
        <authorList>
            <consortium name="International rice genome sequencing project (IRGSP)"/>
        </authorList>
    </citation>
    <scope>NUCLEOTIDE SEQUENCE [LARGE SCALE GENOMIC DNA]</scope>
    <source>
        <strain>cv. Nipponbare</strain>
    </source>
</reference>
<reference key="3">
    <citation type="journal article" date="2008" name="Nucleic Acids Res.">
        <title>The rice annotation project database (RAP-DB): 2008 update.</title>
        <authorList>
            <consortium name="The rice annotation project (RAP)"/>
        </authorList>
    </citation>
    <scope>GENOME REANNOTATION</scope>
    <source>
        <strain>cv. Nipponbare</strain>
    </source>
</reference>
<reference key="4">
    <citation type="journal article" date="2013" name="Rice">
        <title>Improvement of the Oryza sativa Nipponbare reference genome using next generation sequence and optical map data.</title>
        <authorList>
            <person name="Kawahara Y."/>
            <person name="de la Bastide M."/>
            <person name="Hamilton J.P."/>
            <person name="Kanamori H."/>
            <person name="McCombie W.R."/>
            <person name="Ouyang S."/>
            <person name="Schwartz D.C."/>
            <person name="Tanaka T."/>
            <person name="Wu J."/>
            <person name="Zhou S."/>
            <person name="Childs K.L."/>
            <person name="Davidson R.M."/>
            <person name="Lin H."/>
            <person name="Quesada-Ocampo L."/>
            <person name="Vaillancourt B."/>
            <person name="Sakai H."/>
            <person name="Lee S.S."/>
            <person name="Kim J."/>
            <person name="Numa H."/>
            <person name="Itoh T."/>
            <person name="Buell C.R."/>
            <person name="Matsumoto T."/>
        </authorList>
    </citation>
    <scope>GENOME REANNOTATION</scope>
    <source>
        <strain>cv. Nipponbare</strain>
    </source>
</reference>
<reference key="5">
    <citation type="journal article" date="2005" name="PLoS Biol.">
        <title>The genomes of Oryza sativa: a history of duplications.</title>
        <authorList>
            <person name="Yu J."/>
            <person name="Wang J."/>
            <person name="Lin W."/>
            <person name="Li S."/>
            <person name="Li H."/>
            <person name="Zhou J."/>
            <person name="Ni P."/>
            <person name="Dong W."/>
            <person name="Hu S."/>
            <person name="Zeng C."/>
            <person name="Zhang J."/>
            <person name="Zhang Y."/>
            <person name="Li R."/>
            <person name="Xu Z."/>
            <person name="Li S."/>
            <person name="Li X."/>
            <person name="Zheng H."/>
            <person name="Cong L."/>
            <person name="Lin L."/>
            <person name="Yin J."/>
            <person name="Geng J."/>
            <person name="Li G."/>
            <person name="Shi J."/>
            <person name="Liu J."/>
            <person name="Lv H."/>
            <person name="Li J."/>
            <person name="Wang J."/>
            <person name="Deng Y."/>
            <person name="Ran L."/>
            <person name="Shi X."/>
            <person name="Wang X."/>
            <person name="Wu Q."/>
            <person name="Li C."/>
            <person name="Ren X."/>
            <person name="Wang J."/>
            <person name="Wang X."/>
            <person name="Li D."/>
            <person name="Liu D."/>
            <person name="Zhang X."/>
            <person name="Ji Z."/>
            <person name="Zhao W."/>
            <person name="Sun Y."/>
            <person name="Zhang Z."/>
            <person name="Bao J."/>
            <person name="Han Y."/>
            <person name="Dong L."/>
            <person name="Ji J."/>
            <person name="Chen P."/>
            <person name="Wu S."/>
            <person name="Liu J."/>
            <person name="Xiao Y."/>
            <person name="Bu D."/>
            <person name="Tan J."/>
            <person name="Yang L."/>
            <person name="Ye C."/>
            <person name="Zhang J."/>
            <person name="Xu J."/>
            <person name="Zhou Y."/>
            <person name="Yu Y."/>
            <person name="Zhang B."/>
            <person name="Zhuang S."/>
            <person name="Wei H."/>
            <person name="Liu B."/>
            <person name="Lei M."/>
            <person name="Yu H."/>
            <person name="Li Y."/>
            <person name="Xu H."/>
            <person name="Wei S."/>
            <person name="He X."/>
            <person name="Fang L."/>
            <person name="Zhang Z."/>
            <person name="Zhang Y."/>
            <person name="Huang X."/>
            <person name="Su Z."/>
            <person name="Tong W."/>
            <person name="Li J."/>
            <person name="Tong Z."/>
            <person name="Li S."/>
            <person name="Ye J."/>
            <person name="Wang L."/>
            <person name="Fang L."/>
            <person name="Lei T."/>
            <person name="Chen C.-S."/>
            <person name="Chen H.-C."/>
            <person name="Xu Z."/>
            <person name="Li H."/>
            <person name="Huang H."/>
            <person name="Zhang F."/>
            <person name="Xu H."/>
            <person name="Li N."/>
            <person name="Zhao C."/>
            <person name="Li S."/>
            <person name="Dong L."/>
            <person name="Huang Y."/>
            <person name="Li L."/>
            <person name="Xi Y."/>
            <person name="Qi Q."/>
            <person name="Li W."/>
            <person name="Zhang B."/>
            <person name="Hu W."/>
            <person name="Zhang Y."/>
            <person name="Tian X."/>
            <person name="Jiao Y."/>
            <person name="Liang X."/>
            <person name="Jin J."/>
            <person name="Gao L."/>
            <person name="Zheng W."/>
            <person name="Hao B."/>
            <person name="Liu S.-M."/>
            <person name="Wang W."/>
            <person name="Yuan L."/>
            <person name="Cao M."/>
            <person name="McDermott J."/>
            <person name="Samudrala R."/>
            <person name="Wang J."/>
            <person name="Wong G.K.-S."/>
            <person name="Yang H."/>
        </authorList>
    </citation>
    <scope>NUCLEOTIDE SEQUENCE [LARGE SCALE GENOMIC DNA]</scope>
    <source>
        <strain>cv. Nipponbare</strain>
    </source>
</reference>
<reference key="6">
    <citation type="journal article" date="2003" name="Science">
        <title>Collection, mapping, and annotation of over 28,000 cDNA clones from japonica rice.</title>
        <authorList>
            <consortium name="The rice full-length cDNA consortium"/>
        </authorList>
    </citation>
    <scope>NUCLEOTIDE SEQUENCE [LARGE SCALE MRNA]</scope>
    <source>
        <strain>cv. Nipponbare</strain>
    </source>
</reference>
<reference key="7">
    <citation type="online journal article" date="1998" name="Plant Gene Register">
        <title>The rice genome expresses at least six different genes for oxalate oxidase/germin-like proteins.</title>
        <authorList>
            <person name="Membre N."/>
            <person name="Bernier F."/>
        </authorList>
        <locator>PGR98-021</locator>
    </citation>
    <scope>NUCLEOTIDE SEQUENCE [MRNA] OF 4-233</scope>
    <source>
        <strain>cv. Nipponbare</strain>
    </source>
</reference>
<comment type="function">
    <text>May play a role in plant defense. Probably has no oxalate oxidase activity even if the active site is conserved.</text>
</comment>
<comment type="subunit">
    <text evidence="1">Oligomer (believed to be a pentamer but probably hexamer).</text>
</comment>
<comment type="subcellular location">
    <subcellularLocation>
        <location evidence="1">Secreted</location>
        <location evidence="1">Extracellular space</location>
        <location evidence="1">Apoplast</location>
    </subcellularLocation>
</comment>
<comment type="similarity">
    <text evidence="3">Belongs to the germin family.</text>
</comment>
<comment type="sequence caution" evidence="3">
    <conflict type="erroneous initiation">
        <sequence resource="EMBL-CDS" id="AAC25777"/>
    </conflict>
</comment>
<comment type="sequence caution" evidence="3">
    <conflict type="erroneous initiation">
        <sequence resource="EMBL-CDS" id="AAS07225"/>
    </conflict>
</comment>
<comment type="sequence caution" evidence="3">
    <conflict type="erroneous initiation">
        <sequence resource="EMBL-CDS" id="EAZ28967"/>
    </conflict>
</comment>
<dbReference type="EMBL" id="AC135563">
    <property type="protein sequence ID" value="AAS07225.1"/>
    <property type="status" value="ALT_INIT"/>
    <property type="molecule type" value="Genomic_DNA"/>
</dbReference>
<dbReference type="EMBL" id="DP000009">
    <property type="protein sequence ID" value="ABF99424.1"/>
    <property type="molecule type" value="Genomic_DNA"/>
</dbReference>
<dbReference type="EMBL" id="AP008209">
    <property type="protein sequence ID" value="BAF13534.1"/>
    <property type="molecule type" value="Genomic_DNA"/>
</dbReference>
<dbReference type="EMBL" id="AP014959">
    <property type="protein sequence ID" value="BAS86928.1"/>
    <property type="molecule type" value="Genomic_DNA"/>
</dbReference>
<dbReference type="EMBL" id="CM000140">
    <property type="protein sequence ID" value="EAZ28967.1"/>
    <property type="status" value="ALT_INIT"/>
    <property type="molecule type" value="Genomic_DNA"/>
</dbReference>
<dbReference type="EMBL" id="AK062698">
    <property type="protein sequence ID" value="BAG88415.1"/>
    <property type="molecule type" value="mRNA"/>
</dbReference>
<dbReference type="EMBL" id="AF072694">
    <property type="protein sequence ID" value="AAC25777.1"/>
    <property type="status" value="ALT_INIT"/>
    <property type="molecule type" value="mRNA"/>
</dbReference>
<dbReference type="PIR" id="T02923">
    <property type="entry name" value="T02923"/>
</dbReference>
<dbReference type="RefSeq" id="XP_015628931.1">
    <property type="nucleotide sequence ID" value="XM_015773445.1"/>
</dbReference>
<dbReference type="SMR" id="Q10BU2"/>
<dbReference type="FunCoup" id="Q10BU2">
    <property type="interactions" value="42"/>
</dbReference>
<dbReference type="STRING" id="39947.Q10BU2"/>
<dbReference type="GlyCosmos" id="Q10BU2">
    <property type="glycosylation" value="1 site, No reported glycans"/>
</dbReference>
<dbReference type="PaxDb" id="39947-Q10BU2"/>
<dbReference type="EnsemblPlants" id="Os03t0804500-01">
    <property type="protein sequence ID" value="Os03t0804500-01"/>
    <property type="gene ID" value="Os03g0804500"/>
</dbReference>
<dbReference type="Gramene" id="Os03t0804500-01">
    <property type="protein sequence ID" value="Os03t0804500-01"/>
    <property type="gene ID" value="Os03g0804500"/>
</dbReference>
<dbReference type="KEGG" id="dosa:Os03g0804500"/>
<dbReference type="eggNOG" id="ENOG502QSRM">
    <property type="taxonomic scope" value="Eukaryota"/>
</dbReference>
<dbReference type="HOGENOM" id="CLU_015790_0_3_1"/>
<dbReference type="InParanoid" id="Q10BU2"/>
<dbReference type="OMA" id="CCLTVFW"/>
<dbReference type="OrthoDB" id="1921208at2759"/>
<dbReference type="Proteomes" id="UP000000763">
    <property type="component" value="Chromosome 3"/>
</dbReference>
<dbReference type="Proteomes" id="UP000007752">
    <property type="component" value="Chromosome 3"/>
</dbReference>
<dbReference type="Proteomes" id="UP000059680">
    <property type="component" value="Chromosome 3"/>
</dbReference>
<dbReference type="GO" id="GO:0048046">
    <property type="term" value="C:apoplast"/>
    <property type="evidence" value="ECO:0007669"/>
    <property type="project" value="UniProtKB-SubCell"/>
</dbReference>
<dbReference type="GO" id="GO:0030145">
    <property type="term" value="F:manganese ion binding"/>
    <property type="evidence" value="ECO:0007669"/>
    <property type="project" value="InterPro"/>
</dbReference>
<dbReference type="CDD" id="cd02241">
    <property type="entry name" value="cupin_OxOx"/>
    <property type="match status" value="1"/>
</dbReference>
<dbReference type="FunFam" id="2.60.120.10:FF:000005">
    <property type="entry name" value="Germin-like protein subfamily 1 member 8"/>
    <property type="match status" value="1"/>
</dbReference>
<dbReference type="Gene3D" id="2.60.120.10">
    <property type="entry name" value="Jelly Rolls"/>
    <property type="match status" value="1"/>
</dbReference>
<dbReference type="InterPro" id="IPR006045">
    <property type="entry name" value="Cupin_1"/>
</dbReference>
<dbReference type="InterPro" id="IPR001929">
    <property type="entry name" value="Germin"/>
</dbReference>
<dbReference type="InterPro" id="IPR019780">
    <property type="entry name" value="Germin_Mn-BS"/>
</dbReference>
<dbReference type="InterPro" id="IPR014710">
    <property type="entry name" value="RmlC-like_jellyroll"/>
</dbReference>
<dbReference type="InterPro" id="IPR011051">
    <property type="entry name" value="RmlC_Cupin_sf"/>
</dbReference>
<dbReference type="PANTHER" id="PTHR31238">
    <property type="entry name" value="GERMIN-LIKE PROTEIN SUBFAMILY 3 MEMBER 3"/>
    <property type="match status" value="1"/>
</dbReference>
<dbReference type="Pfam" id="PF00190">
    <property type="entry name" value="Cupin_1"/>
    <property type="match status" value="1"/>
</dbReference>
<dbReference type="PRINTS" id="PR00325">
    <property type="entry name" value="GERMIN"/>
</dbReference>
<dbReference type="SMART" id="SM00835">
    <property type="entry name" value="Cupin_1"/>
    <property type="match status" value="1"/>
</dbReference>
<dbReference type="SUPFAM" id="SSF51182">
    <property type="entry name" value="RmlC-like cupins"/>
    <property type="match status" value="1"/>
</dbReference>
<dbReference type="PROSITE" id="PS00725">
    <property type="entry name" value="GERMIN"/>
    <property type="match status" value="1"/>
</dbReference>
<organism>
    <name type="scientific">Oryza sativa subsp. japonica</name>
    <name type="common">Rice</name>
    <dbReference type="NCBI Taxonomy" id="39947"/>
    <lineage>
        <taxon>Eukaryota</taxon>
        <taxon>Viridiplantae</taxon>
        <taxon>Streptophyta</taxon>
        <taxon>Embryophyta</taxon>
        <taxon>Tracheophyta</taxon>
        <taxon>Spermatophyta</taxon>
        <taxon>Magnoliopsida</taxon>
        <taxon>Liliopsida</taxon>
        <taxon>Poales</taxon>
        <taxon>Poaceae</taxon>
        <taxon>BOP clade</taxon>
        <taxon>Oryzoideae</taxon>
        <taxon>Oryzeae</taxon>
        <taxon>Oryzinae</taxon>
        <taxon>Oryza</taxon>
        <taxon>Oryza sativa</taxon>
    </lineage>
</organism>
<gene>
    <name type="primary">GER7</name>
    <name type="ordered locus">Os03g0804500</name>
    <name type="ordered locus">LOC_Os03g58980</name>
    <name type="ORF">OsJ_012450</name>
    <name type="ORF">OSJNBb0015I02.7</name>
</gene>
<protein>
    <recommendedName>
        <fullName>Germin-like protein 3-7</fullName>
    </recommendedName>
    <alternativeName>
        <fullName>Germin-like protein 7</fullName>
        <shortName>OsGER7</shortName>
    </alternativeName>
</protein>
<sequence>MSSSSSMECTGNMSAAPLLVLTVAVLAVLASTCAADPEPIQDFCVAVPRAGGEASPAYPGFPCKPASAVVSDDFFFAGLAAAGSTDNPFGASLKPGNVEAFPALNTLGVAINRVDLAPGGVNPLHSHPRAAELVHVITGRMLVGFVSTAGKYYSKVVGEGETFAIPRGLMHFQYNPGNASARAMTVFNSQLPGVVPAATALFGADPEIPDAVLAKSFQVDAEIIKLLKSKFKK</sequence>
<proteinExistence type="evidence at transcript level"/>
<keyword id="KW-0052">Apoplast</keyword>
<keyword id="KW-1015">Disulfide bond</keyword>
<keyword id="KW-0325">Glycoprotein</keyword>
<keyword id="KW-0464">Manganese</keyword>
<keyword id="KW-0479">Metal-binding</keyword>
<keyword id="KW-1185">Reference proteome</keyword>
<keyword id="KW-0964">Secreted</keyword>
<keyword id="KW-0732">Signal</keyword>
<accession>Q10BU2</accession>
<accession>A0A0P0W4B5</accession>
<accession>O81385</accession>
<accession>Q75HJ7</accession>
<feature type="signal peptide" evidence="2">
    <location>
        <begin position="1"/>
        <end position="35"/>
    </location>
</feature>
<feature type="chain" id="PRO_0000365508" description="Germin-like protein 3-7">
    <location>
        <begin position="36"/>
        <end position="233"/>
    </location>
</feature>
<feature type="domain" description="Cupin type-1" evidence="2">
    <location>
        <begin position="77"/>
        <end position="225"/>
    </location>
</feature>
<feature type="binding site" evidence="1">
    <location>
        <position position="125"/>
    </location>
    <ligand>
        <name>Mn(2+)</name>
        <dbReference type="ChEBI" id="CHEBI:29035"/>
    </ligand>
</feature>
<feature type="binding site" evidence="1">
    <location>
        <position position="127"/>
    </location>
    <ligand>
        <name>Mn(2+)</name>
        <dbReference type="ChEBI" id="CHEBI:29035"/>
    </ligand>
</feature>
<feature type="binding site" evidence="1">
    <location>
        <position position="132"/>
    </location>
    <ligand>
        <name>Mn(2+)</name>
        <dbReference type="ChEBI" id="CHEBI:29035"/>
    </ligand>
</feature>
<feature type="binding site" evidence="1">
    <location>
        <position position="171"/>
    </location>
    <ligand>
        <name>Mn(2+)</name>
        <dbReference type="ChEBI" id="CHEBI:29035"/>
    </ligand>
</feature>
<feature type="glycosylation site" description="N-linked (GlcNAc...) asparagine" evidence="2">
    <location>
        <position position="178"/>
    </location>
</feature>
<feature type="disulfide bond" evidence="1">
    <location>
        <begin position="44"/>
        <end position="63"/>
    </location>
</feature>
<name>GL37_ORYSJ</name>
<evidence type="ECO:0000250" key="1"/>
<evidence type="ECO:0000255" key="2"/>
<evidence type="ECO:0000305" key="3"/>